<feature type="chain" id="PRO_0000238050" description="Large-conductance mechanosensitive channel">
    <location>
        <begin position="1"/>
        <end position="143"/>
    </location>
</feature>
<feature type="transmembrane region" description="Helical" evidence="1">
    <location>
        <begin position="16"/>
        <end position="36"/>
    </location>
</feature>
<feature type="transmembrane region" description="Helical" evidence="1">
    <location>
        <begin position="84"/>
        <end position="104"/>
    </location>
</feature>
<reference key="1">
    <citation type="journal article" date="2002" name="Nature">
        <title>Comparison of the genomes of two Xanthomonas pathogens with differing host specificities.</title>
        <authorList>
            <person name="da Silva A.C.R."/>
            <person name="Ferro J.A."/>
            <person name="Reinach F.C."/>
            <person name="Farah C.S."/>
            <person name="Furlan L.R."/>
            <person name="Quaggio R.B."/>
            <person name="Monteiro-Vitorello C.B."/>
            <person name="Van Sluys M.A."/>
            <person name="Almeida N.F. Jr."/>
            <person name="Alves L.M.C."/>
            <person name="do Amaral A.M."/>
            <person name="Bertolini M.C."/>
            <person name="Camargo L.E.A."/>
            <person name="Camarotte G."/>
            <person name="Cannavan F."/>
            <person name="Cardozo J."/>
            <person name="Chambergo F."/>
            <person name="Ciapina L.P."/>
            <person name="Cicarelli R.M.B."/>
            <person name="Coutinho L.L."/>
            <person name="Cursino-Santos J.R."/>
            <person name="El-Dorry H."/>
            <person name="Faria J.B."/>
            <person name="Ferreira A.J.S."/>
            <person name="Ferreira R.C.C."/>
            <person name="Ferro M.I.T."/>
            <person name="Formighieri E.F."/>
            <person name="Franco M.C."/>
            <person name="Greggio C.C."/>
            <person name="Gruber A."/>
            <person name="Katsuyama A.M."/>
            <person name="Kishi L.T."/>
            <person name="Leite R.P."/>
            <person name="Lemos E.G.M."/>
            <person name="Lemos M.V.F."/>
            <person name="Locali E.C."/>
            <person name="Machado M.A."/>
            <person name="Madeira A.M.B.N."/>
            <person name="Martinez-Rossi N.M."/>
            <person name="Martins E.C."/>
            <person name="Meidanis J."/>
            <person name="Menck C.F.M."/>
            <person name="Miyaki C.Y."/>
            <person name="Moon D.H."/>
            <person name="Moreira L.M."/>
            <person name="Novo M.T.M."/>
            <person name="Okura V.K."/>
            <person name="Oliveira M.C."/>
            <person name="Oliveira V.R."/>
            <person name="Pereira H.A."/>
            <person name="Rossi A."/>
            <person name="Sena J.A.D."/>
            <person name="Silva C."/>
            <person name="de Souza R.F."/>
            <person name="Spinola L.A.F."/>
            <person name="Takita M.A."/>
            <person name="Tamura R.E."/>
            <person name="Teixeira E.C."/>
            <person name="Tezza R.I.D."/>
            <person name="Trindade dos Santos M."/>
            <person name="Truffi D."/>
            <person name="Tsai S.M."/>
            <person name="White F.F."/>
            <person name="Setubal J.C."/>
            <person name="Kitajima J.P."/>
        </authorList>
    </citation>
    <scope>NUCLEOTIDE SEQUENCE [LARGE SCALE GENOMIC DNA]</scope>
    <source>
        <strain>ATCC 33913 / DSM 3586 / NCPPB 528 / LMG 568 / P 25</strain>
    </source>
</reference>
<sequence>MGMVSEFKQFAMRGNVIDLAVGVVIGAAFGKIVTALVEKIIMPPIGWAIGNVDFSRLAWVLKPAGVDATGKEIPAVVIGYGDFINTVVQFVIIAFAIFLVVKLINRLSQRKPDAPKGPSEEVLLLREIRDSLKNDTLKNPTVP</sequence>
<comment type="function">
    <text evidence="1">Channel that opens in response to stretch forces in the membrane lipid bilayer. May participate in the regulation of osmotic pressure changes within the cell.</text>
</comment>
<comment type="subunit">
    <text evidence="1">Homopentamer.</text>
</comment>
<comment type="subcellular location">
    <subcellularLocation>
        <location evidence="1">Cell inner membrane</location>
        <topology evidence="1">Multi-pass membrane protein</topology>
    </subcellularLocation>
</comment>
<comment type="similarity">
    <text evidence="1">Belongs to the MscL family.</text>
</comment>
<keyword id="KW-0997">Cell inner membrane</keyword>
<keyword id="KW-1003">Cell membrane</keyword>
<keyword id="KW-0407">Ion channel</keyword>
<keyword id="KW-0406">Ion transport</keyword>
<keyword id="KW-0472">Membrane</keyword>
<keyword id="KW-1185">Reference proteome</keyword>
<keyword id="KW-0812">Transmembrane</keyword>
<keyword id="KW-1133">Transmembrane helix</keyword>
<keyword id="KW-0813">Transport</keyword>
<proteinExistence type="inferred from homology"/>
<organism>
    <name type="scientific">Xanthomonas campestris pv. campestris (strain ATCC 33913 / DSM 3586 / NCPPB 528 / LMG 568 / P 25)</name>
    <dbReference type="NCBI Taxonomy" id="190485"/>
    <lineage>
        <taxon>Bacteria</taxon>
        <taxon>Pseudomonadati</taxon>
        <taxon>Pseudomonadota</taxon>
        <taxon>Gammaproteobacteria</taxon>
        <taxon>Lysobacterales</taxon>
        <taxon>Lysobacteraceae</taxon>
        <taxon>Xanthomonas</taxon>
    </lineage>
</organism>
<protein>
    <recommendedName>
        <fullName evidence="1">Large-conductance mechanosensitive channel</fullName>
    </recommendedName>
</protein>
<dbReference type="EMBL" id="AE008922">
    <property type="protein sequence ID" value="AAM42426.1"/>
    <property type="molecule type" value="Genomic_DNA"/>
</dbReference>
<dbReference type="RefSeq" id="NP_638502.1">
    <property type="nucleotide sequence ID" value="NC_003902.1"/>
</dbReference>
<dbReference type="RefSeq" id="WP_011038263.1">
    <property type="nucleotide sequence ID" value="NC_003902.1"/>
</dbReference>
<dbReference type="SMR" id="Q8P626"/>
<dbReference type="STRING" id="190485.XCC3156"/>
<dbReference type="EnsemblBacteria" id="AAM42426">
    <property type="protein sequence ID" value="AAM42426"/>
    <property type="gene ID" value="XCC3156"/>
</dbReference>
<dbReference type="KEGG" id="xcc:XCC3156"/>
<dbReference type="PATRIC" id="fig|190485.4.peg.3372"/>
<dbReference type="eggNOG" id="COG1970">
    <property type="taxonomic scope" value="Bacteria"/>
</dbReference>
<dbReference type="HOGENOM" id="CLU_095787_0_0_6"/>
<dbReference type="OrthoDB" id="9810350at2"/>
<dbReference type="Proteomes" id="UP000001010">
    <property type="component" value="Chromosome"/>
</dbReference>
<dbReference type="GO" id="GO:0016020">
    <property type="term" value="C:membrane"/>
    <property type="evidence" value="ECO:0000318"/>
    <property type="project" value="GO_Central"/>
</dbReference>
<dbReference type="GO" id="GO:0005886">
    <property type="term" value="C:plasma membrane"/>
    <property type="evidence" value="ECO:0007669"/>
    <property type="project" value="UniProtKB-SubCell"/>
</dbReference>
<dbReference type="GO" id="GO:0008381">
    <property type="term" value="F:mechanosensitive monoatomic ion channel activity"/>
    <property type="evidence" value="ECO:0000318"/>
    <property type="project" value="GO_Central"/>
</dbReference>
<dbReference type="GO" id="GO:0006811">
    <property type="term" value="P:monoatomic ion transport"/>
    <property type="evidence" value="ECO:0000318"/>
    <property type="project" value="GO_Central"/>
</dbReference>
<dbReference type="FunFam" id="1.10.1200.120:FF:000001">
    <property type="entry name" value="Large-conductance mechanosensitive channel"/>
    <property type="match status" value="1"/>
</dbReference>
<dbReference type="Gene3D" id="1.10.1200.120">
    <property type="entry name" value="Large-conductance mechanosensitive channel, MscL, domain 1"/>
    <property type="match status" value="1"/>
</dbReference>
<dbReference type="HAMAP" id="MF_00115">
    <property type="entry name" value="MscL"/>
    <property type="match status" value="1"/>
</dbReference>
<dbReference type="InterPro" id="IPR019823">
    <property type="entry name" value="Mechanosensitive_channel_CS"/>
</dbReference>
<dbReference type="InterPro" id="IPR001185">
    <property type="entry name" value="MS_channel"/>
</dbReference>
<dbReference type="InterPro" id="IPR037673">
    <property type="entry name" value="MSC/AndL"/>
</dbReference>
<dbReference type="InterPro" id="IPR036019">
    <property type="entry name" value="MscL_channel"/>
</dbReference>
<dbReference type="NCBIfam" id="TIGR00220">
    <property type="entry name" value="mscL"/>
    <property type="match status" value="1"/>
</dbReference>
<dbReference type="NCBIfam" id="NF001843">
    <property type="entry name" value="PRK00567.1-4"/>
    <property type="match status" value="1"/>
</dbReference>
<dbReference type="PANTHER" id="PTHR30266:SF2">
    <property type="entry name" value="LARGE-CONDUCTANCE MECHANOSENSITIVE CHANNEL"/>
    <property type="match status" value="1"/>
</dbReference>
<dbReference type="PANTHER" id="PTHR30266">
    <property type="entry name" value="MECHANOSENSITIVE CHANNEL MSCL"/>
    <property type="match status" value="1"/>
</dbReference>
<dbReference type="Pfam" id="PF01741">
    <property type="entry name" value="MscL"/>
    <property type="match status" value="1"/>
</dbReference>
<dbReference type="PRINTS" id="PR01264">
    <property type="entry name" value="MECHCHANNEL"/>
</dbReference>
<dbReference type="SUPFAM" id="SSF81330">
    <property type="entry name" value="Gated mechanosensitive channel"/>
    <property type="match status" value="1"/>
</dbReference>
<dbReference type="PROSITE" id="PS01327">
    <property type="entry name" value="MSCL"/>
    <property type="match status" value="1"/>
</dbReference>
<evidence type="ECO:0000255" key="1">
    <source>
        <dbReference type="HAMAP-Rule" id="MF_00115"/>
    </source>
</evidence>
<name>MSCL_XANCP</name>
<gene>
    <name evidence="1" type="primary">mscL</name>
    <name type="ordered locus">XCC3156</name>
</gene>
<accession>Q8P626</accession>